<protein>
    <recommendedName>
        <fullName evidence="1">4-hydroxy-tetrahydrodipicolinate reductase</fullName>
        <shortName evidence="1">HTPA reductase</shortName>
        <ecNumber evidence="1">1.17.1.8</ecNumber>
    </recommendedName>
</protein>
<gene>
    <name evidence="1" type="primary">dapB</name>
    <name type="ordered locus">SCO5739</name>
    <name type="ORF">SC9A10.03</name>
</gene>
<feature type="chain" id="PRO_0000141495" description="4-hydroxy-tetrahydrodipicolinate reductase">
    <location>
        <begin position="1"/>
        <end position="250"/>
    </location>
</feature>
<feature type="active site" description="Proton donor/acceptor" evidence="1">
    <location>
        <position position="135"/>
    </location>
</feature>
<feature type="active site" description="Proton donor" evidence="1">
    <location>
        <position position="139"/>
    </location>
</feature>
<feature type="binding site" evidence="1">
    <location>
        <begin position="10"/>
        <end position="15"/>
    </location>
    <ligand>
        <name>NAD(+)</name>
        <dbReference type="ChEBI" id="CHEBI:57540"/>
    </ligand>
</feature>
<feature type="binding site" evidence="1">
    <location>
        <begin position="78"/>
        <end position="80"/>
    </location>
    <ligand>
        <name>NAD(+)</name>
        <dbReference type="ChEBI" id="CHEBI:57540"/>
    </ligand>
</feature>
<feature type="binding site" evidence="1">
    <location>
        <begin position="105"/>
        <end position="108"/>
    </location>
    <ligand>
        <name>NAD(+)</name>
        <dbReference type="ChEBI" id="CHEBI:57540"/>
    </ligand>
</feature>
<feature type="binding site" evidence="1">
    <location>
        <position position="136"/>
    </location>
    <ligand>
        <name>(S)-2,3,4,5-tetrahydrodipicolinate</name>
        <dbReference type="ChEBI" id="CHEBI:16845"/>
    </ligand>
</feature>
<feature type="binding site" evidence="1">
    <location>
        <begin position="145"/>
        <end position="146"/>
    </location>
    <ligand>
        <name>(S)-2,3,4,5-tetrahydrodipicolinate</name>
        <dbReference type="ChEBI" id="CHEBI:16845"/>
    </ligand>
</feature>
<name>DAPB_STRCO</name>
<reference key="1">
    <citation type="journal article" date="2002" name="Nature">
        <title>Complete genome sequence of the model actinomycete Streptomyces coelicolor A3(2).</title>
        <authorList>
            <person name="Bentley S.D."/>
            <person name="Chater K.F."/>
            <person name="Cerdeno-Tarraga A.-M."/>
            <person name="Challis G.L."/>
            <person name="Thomson N.R."/>
            <person name="James K.D."/>
            <person name="Harris D.E."/>
            <person name="Quail M.A."/>
            <person name="Kieser H."/>
            <person name="Harper D."/>
            <person name="Bateman A."/>
            <person name="Brown S."/>
            <person name="Chandra G."/>
            <person name="Chen C.W."/>
            <person name="Collins M."/>
            <person name="Cronin A."/>
            <person name="Fraser A."/>
            <person name="Goble A."/>
            <person name="Hidalgo J."/>
            <person name="Hornsby T."/>
            <person name="Howarth S."/>
            <person name="Huang C.-H."/>
            <person name="Kieser T."/>
            <person name="Larke L."/>
            <person name="Murphy L.D."/>
            <person name="Oliver K."/>
            <person name="O'Neil S."/>
            <person name="Rabbinowitsch E."/>
            <person name="Rajandream M.A."/>
            <person name="Rutherford K.M."/>
            <person name="Rutter S."/>
            <person name="Seeger K."/>
            <person name="Saunders D."/>
            <person name="Sharp S."/>
            <person name="Squares R."/>
            <person name="Squares S."/>
            <person name="Taylor K."/>
            <person name="Warren T."/>
            <person name="Wietzorrek A."/>
            <person name="Woodward J.R."/>
            <person name="Barrell B.G."/>
            <person name="Parkhill J."/>
            <person name="Hopwood D.A."/>
        </authorList>
    </citation>
    <scope>NUCLEOTIDE SEQUENCE [LARGE SCALE GENOMIC DNA]</scope>
    <source>
        <strain>ATCC BAA-471 / A3(2) / M145</strain>
    </source>
</reference>
<evidence type="ECO:0000255" key="1">
    <source>
        <dbReference type="HAMAP-Rule" id="MF_00102"/>
    </source>
</evidence>
<evidence type="ECO:0000305" key="2"/>
<proteinExistence type="inferred from homology"/>
<sequence>MSKLRVAVLGAKGRIGSEAVRAVEAAEDMELVAALGRGDGLEALAESGAQVAVELTTPASVMDNLDYCLRHGIHAVVGTTGWTDERLARLNAWLDASPGTGVLIAPNFSIGAVLTMKFAQIAAPYFESVEVVELHHPNKVDAPSGTATRTAQLIAQARQKAGSAPAPDATATALDGARGANVDGVPVHAVRLRGLLAHQEVLLGAEGETLTVRHDSLHHSSFMPGILLGARRVVTTPGLTFGLEHFLDLN</sequence>
<comment type="function">
    <text evidence="1">Catalyzes the conversion of 4-hydroxy-tetrahydrodipicolinate (HTPA) to tetrahydrodipicolinate.</text>
</comment>
<comment type="catalytic activity">
    <reaction evidence="1">
        <text>(S)-2,3,4,5-tetrahydrodipicolinate + NAD(+) + H2O = (2S,4S)-4-hydroxy-2,3,4,5-tetrahydrodipicolinate + NADH + H(+)</text>
        <dbReference type="Rhea" id="RHEA:35323"/>
        <dbReference type="ChEBI" id="CHEBI:15377"/>
        <dbReference type="ChEBI" id="CHEBI:15378"/>
        <dbReference type="ChEBI" id="CHEBI:16845"/>
        <dbReference type="ChEBI" id="CHEBI:57540"/>
        <dbReference type="ChEBI" id="CHEBI:57945"/>
        <dbReference type="ChEBI" id="CHEBI:67139"/>
        <dbReference type="EC" id="1.17.1.8"/>
    </reaction>
</comment>
<comment type="catalytic activity">
    <reaction evidence="1">
        <text>(S)-2,3,4,5-tetrahydrodipicolinate + NADP(+) + H2O = (2S,4S)-4-hydroxy-2,3,4,5-tetrahydrodipicolinate + NADPH + H(+)</text>
        <dbReference type="Rhea" id="RHEA:35331"/>
        <dbReference type="ChEBI" id="CHEBI:15377"/>
        <dbReference type="ChEBI" id="CHEBI:15378"/>
        <dbReference type="ChEBI" id="CHEBI:16845"/>
        <dbReference type="ChEBI" id="CHEBI:57783"/>
        <dbReference type="ChEBI" id="CHEBI:58349"/>
        <dbReference type="ChEBI" id="CHEBI:67139"/>
        <dbReference type="EC" id="1.17.1.8"/>
    </reaction>
</comment>
<comment type="pathway">
    <text evidence="1">Amino-acid biosynthesis; L-lysine biosynthesis via DAP pathway; (S)-tetrahydrodipicolinate from L-aspartate: step 4/4.</text>
</comment>
<comment type="subcellular location">
    <subcellularLocation>
        <location evidence="1">Cytoplasm</location>
    </subcellularLocation>
</comment>
<comment type="similarity">
    <text evidence="1">Belongs to the DapB family.</text>
</comment>
<comment type="caution">
    <text evidence="2">Was originally thought to be a dihydrodipicolinate reductase (DHDPR), catalyzing the conversion of dihydrodipicolinate to tetrahydrodipicolinate. However, it was shown in E.coli that the substrate of the enzymatic reaction is not dihydrodipicolinate (DHDP) but in fact (2S,4S)-4-hydroxy-2,3,4,5-tetrahydrodipicolinic acid (HTPA), the product released by the DapA-catalyzed reaction.</text>
</comment>
<accession>O86836</accession>
<keyword id="KW-0028">Amino-acid biosynthesis</keyword>
<keyword id="KW-0963">Cytoplasm</keyword>
<keyword id="KW-0220">Diaminopimelate biosynthesis</keyword>
<keyword id="KW-0457">Lysine biosynthesis</keyword>
<keyword id="KW-0520">NAD</keyword>
<keyword id="KW-0521">NADP</keyword>
<keyword id="KW-0560">Oxidoreductase</keyword>
<keyword id="KW-1185">Reference proteome</keyword>
<organism>
    <name type="scientific">Streptomyces coelicolor (strain ATCC BAA-471 / A3(2) / M145)</name>
    <dbReference type="NCBI Taxonomy" id="100226"/>
    <lineage>
        <taxon>Bacteria</taxon>
        <taxon>Bacillati</taxon>
        <taxon>Actinomycetota</taxon>
        <taxon>Actinomycetes</taxon>
        <taxon>Kitasatosporales</taxon>
        <taxon>Streptomycetaceae</taxon>
        <taxon>Streptomyces</taxon>
        <taxon>Streptomyces albidoflavus group</taxon>
    </lineage>
</organism>
<dbReference type="EC" id="1.17.1.8" evidence="1"/>
<dbReference type="EMBL" id="AL939124">
    <property type="protein sequence ID" value="CAA20290.1"/>
    <property type="molecule type" value="Genomic_DNA"/>
</dbReference>
<dbReference type="PIR" id="T35839">
    <property type="entry name" value="T35839"/>
</dbReference>
<dbReference type="RefSeq" id="NP_629864.1">
    <property type="nucleotide sequence ID" value="NC_003888.3"/>
</dbReference>
<dbReference type="RefSeq" id="WP_011030428.1">
    <property type="nucleotide sequence ID" value="NZ_VNID01000024.1"/>
</dbReference>
<dbReference type="SMR" id="O86836"/>
<dbReference type="FunCoup" id="O86836">
    <property type="interactions" value="277"/>
</dbReference>
<dbReference type="STRING" id="100226.gene:17763395"/>
<dbReference type="PaxDb" id="100226-SCO5739"/>
<dbReference type="GeneID" id="91383319"/>
<dbReference type="KEGG" id="sco:SCO5739"/>
<dbReference type="PATRIC" id="fig|100226.15.peg.5827"/>
<dbReference type="eggNOG" id="COG0289">
    <property type="taxonomic scope" value="Bacteria"/>
</dbReference>
<dbReference type="HOGENOM" id="CLU_047479_0_1_11"/>
<dbReference type="InParanoid" id="O86836"/>
<dbReference type="OrthoDB" id="9790352at2"/>
<dbReference type="PhylomeDB" id="O86836"/>
<dbReference type="UniPathway" id="UPA00034">
    <property type="reaction ID" value="UER00018"/>
</dbReference>
<dbReference type="Proteomes" id="UP000001973">
    <property type="component" value="Chromosome"/>
</dbReference>
<dbReference type="GO" id="GO:0005829">
    <property type="term" value="C:cytosol"/>
    <property type="evidence" value="ECO:0000318"/>
    <property type="project" value="GO_Central"/>
</dbReference>
<dbReference type="GO" id="GO:0008839">
    <property type="term" value="F:4-hydroxy-tetrahydrodipicolinate reductase"/>
    <property type="evidence" value="ECO:0000318"/>
    <property type="project" value="GO_Central"/>
</dbReference>
<dbReference type="GO" id="GO:0051287">
    <property type="term" value="F:NAD binding"/>
    <property type="evidence" value="ECO:0007669"/>
    <property type="project" value="UniProtKB-UniRule"/>
</dbReference>
<dbReference type="GO" id="GO:0050661">
    <property type="term" value="F:NADP binding"/>
    <property type="evidence" value="ECO:0007669"/>
    <property type="project" value="UniProtKB-UniRule"/>
</dbReference>
<dbReference type="GO" id="GO:0016726">
    <property type="term" value="F:oxidoreductase activity, acting on CH or CH2 groups, NAD or NADP as acceptor"/>
    <property type="evidence" value="ECO:0007669"/>
    <property type="project" value="UniProtKB-UniRule"/>
</dbReference>
<dbReference type="GO" id="GO:0019877">
    <property type="term" value="P:diaminopimelate biosynthetic process"/>
    <property type="evidence" value="ECO:0000318"/>
    <property type="project" value="GO_Central"/>
</dbReference>
<dbReference type="GO" id="GO:0009089">
    <property type="term" value="P:lysine biosynthetic process via diaminopimelate"/>
    <property type="evidence" value="ECO:0007669"/>
    <property type="project" value="UniProtKB-UniRule"/>
</dbReference>
<dbReference type="CDD" id="cd02274">
    <property type="entry name" value="DHDPR_N"/>
    <property type="match status" value="1"/>
</dbReference>
<dbReference type="FunFam" id="3.30.360.10:FF:000009">
    <property type="entry name" value="4-hydroxy-tetrahydrodipicolinate reductase"/>
    <property type="match status" value="1"/>
</dbReference>
<dbReference type="Gene3D" id="3.30.360.10">
    <property type="entry name" value="Dihydrodipicolinate Reductase, domain 2"/>
    <property type="match status" value="1"/>
</dbReference>
<dbReference type="Gene3D" id="3.40.50.720">
    <property type="entry name" value="NAD(P)-binding Rossmann-like Domain"/>
    <property type="match status" value="1"/>
</dbReference>
<dbReference type="HAMAP" id="MF_00102">
    <property type="entry name" value="DapB"/>
    <property type="match status" value="1"/>
</dbReference>
<dbReference type="InterPro" id="IPR022663">
    <property type="entry name" value="DapB_C"/>
</dbReference>
<dbReference type="InterPro" id="IPR000846">
    <property type="entry name" value="DapB_N"/>
</dbReference>
<dbReference type="InterPro" id="IPR022664">
    <property type="entry name" value="DapB_N_CS"/>
</dbReference>
<dbReference type="InterPro" id="IPR023940">
    <property type="entry name" value="DHDPR_bac"/>
</dbReference>
<dbReference type="InterPro" id="IPR036291">
    <property type="entry name" value="NAD(P)-bd_dom_sf"/>
</dbReference>
<dbReference type="NCBIfam" id="TIGR00036">
    <property type="entry name" value="dapB"/>
    <property type="match status" value="1"/>
</dbReference>
<dbReference type="PANTHER" id="PTHR20836:SF0">
    <property type="entry name" value="4-HYDROXY-TETRAHYDRODIPICOLINATE REDUCTASE 1, CHLOROPLASTIC-RELATED"/>
    <property type="match status" value="1"/>
</dbReference>
<dbReference type="PANTHER" id="PTHR20836">
    <property type="entry name" value="DIHYDRODIPICOLINATE REDUCTASE"/>
    <property type="match status" value="1"/>
</dbReference>
<dbReference type="Pfam" id="PF05173">
    <property type="entry name" value="DapB_C"/>
    <property type="match status" value="1"/>
</dbReference>
<dbReference type="Pfam" id="PF01113">
    <property type="entry name" value="DapB_N"/>
    <property type="match status" value="1"/>
</dbReference>
<dbReference type="PIRSF" id="PIRSF000161">
    <property type="entry name" value="DHPR"/>
    <property type="match status" value="1"/>
</dbReference>
<dbReference type="SUPFAM" id="SSF55347">
    <property type="entry name" value="Glyceraldehyde-3-phosphate dehydrogenase-like, C-terminal domain"/>
    <property type="match status" value="1"/>
</dbReference>
<dbReference type="SUPFAM" id="SSF51735">
    <property type="entry name" value="NAD(P)-binding Rossmann-fold domains"/>
    <property type="match status" value="1"/>
</dbReference>
<dbReference type="PROSITE" id="PS01298">
    <property type="entry name" value="DAPB"/>
    <property type="match status" value="1"/>
</dbReference>